<comment type="function">
    <text evidence="1">Transports the metallophore pseudopaline, which is involved in the acquisition of nickel and zinc, and thus enables bacterial growth inside the host, where metal access is limited. Is probably involved in the import of pseudopaline-metal complexes.</text>
</comment>
<comment type="subcellular location">
    <subcellularLocation>
        <location evidence="3 7">Cell outer membrane</location>
        <topology evidence="3">Multi-pass membrane protein</topology>
    </subcellularLocation>
</comment>
<comment type="induction">
    <text evidence="4 5">Is part of the operon cntOLMI that is negatively regulated by zinc level through the Zur repressor, which leads to transcriptional activation of this operon under zinc depletion (PubMed:28898501). Highly induced in response to airway mucus secretions (AMS) treatment (PubMed:26446565).</text>
</comment>
<comment type="disruption phenotype">
    <text evidence="5">Deletion mutant does not show growth defect in LB medium, but it exhibits an evident growth defect after treatment with AMS.</text>
</comment>
<comment type="similarity">
    <text evidence="7">Belongs to the TonB-dependent receptor family.</text>
</comment>
<proteinExistence type="evidence at transcript level"/>
<reference key="1">
    <citation type="journal article" date="2000" name="Nature">
        <title>Complete genome sequence of Pseudomonas aeruginosa PAO1, an opportunistic pathogen.</title>
        <authorList>
            <person name="Stover C.K."/>
            <person name="Pham X.-Q.T."/>
            <person name="Erwin A.L."/>
            <person name="Mizoguchi S.D."/>
            <person name="Warrener P."/>
            <person name="Hickey M.J."/>
            <person name="Brinkman F.S.L."/>
            <person name="Hufnagle W.O."/>
            <person name="Kowalik D.J."/>
            <person name="Lagrou M."/>
            <person name="Garber R.L."/>
            <person name="Goltry L."/>
            <person name="Tolentino E."/>
            <person name="Westbrock-Wadman S."/>
            <person name="Yuan Y."/>
            <person name="Brody L.L."/>
            <person name="Coulter S.N."/>
            <person name="Folger K.R."/>
            <person name="Kas A."/>
            <person name="Larbig K."/>
            <person name="Lim R.M."/>
            <person name="Smith K.A."/>
            <person name="Spencer D.H."/>
            <person name="Wong G.K.-S."/>
            <person name="Wu Z."/>
            <person name="Paulsen I.T."/>
            <person name="Reizer J."/>
            <person name="Saier M.H. Jr."/>
            <person name="Hancock R.E.W."/>
            <person name="Lory S."/>
            <person name="Olson M.V."/>
        </authorList>
    </citation>
    <scope>NUCLEOTIDE SEQUENCE [LARGE SCALE GENOMIC DNA]</scope>
    <source>
        <strain>ATCC 15692 / DSM 22644 / CIP 104116 / JCM 14847 / LMG 12228 / 1C / PRS 101 / PAO1</strain>
    </source>
</reference>
<reference key="2">
    <citation type="journal article" date="2015" name="Sci. Rep.">
        <title>A novel siderophore system is essential for the growth of Pseudomonas aeruginosa in airway mucus.</title>
        <authorList>
            <person name="Gi M."/>
            <person name="Lee K.M."/>
            <person name="Kim S.C."/>
            <person name="Yoon J.H."/>
            <person name="Yoon S.S."/>
            <person name="Choi J.Y."/>
        </authorList>
    </citation>
    <scope>INDUCTION</scope>
    <source>
        <strain>ATCC 15692 / DSM 22644 / CIP 104116 / JCM 14847 / LMG 12228 / 1C / PRS 101 / PAO1</strain>
    </source>
</reference>
<reference key="3">
    <citation type="journal article" date="2017" name="Mol. Microbiol.">
        <title>Growth of Pseudomonas aeruginosa in zinc poor environments is promoted by a nicotianamine-related metallophore.</title>
        <authorList>
            <person name="Mastropasqua M.C."/>
            <person name="D'Orazio M."/>
            <person name="Cerasi M."/>
            <person name="Pacello F."/>
            <person name="Gismondi A."/>
            <person name="Canini A."/>
            <person name="Canuti L."/>
            <person name="Consalvo A."/>
            <person name="Ciavardelli D."/>
            <person name="Chirullo B."/>
            <person name="Pasquali P."/>
            <person name="Battistoni A."/>
        </authorList>
    </citation>
    <scope>INDUCTION</scope>
    <scope>DISRUPTION PHENOTYPE</scope>
    <source>
        <strain>ATCC 15692 / DSM 22644 / CIP 104116 / JCM 14847 / LMG 12228 / 1C / PRS 101 / PAO1</strain>
    </source>
</reference>
<protein>
    <recommendedName>
        <fullName evidence="7">Metal-pseudopaline receptor CntO</fullName>
    </recommendedName>
</protein>
<evidence type="ECO:0000250" key="1">
    <source>
        <dbReference type="UniProtKB" id="A0A0H2ZI93"/>
    </source>
</evidence>
<evidence type="ECO:0000255" key="2"/>
<evidence type="ECO:0000255" key="3">
    <source>
        <dbReference type="PROSITE-ProRule" id="PRU01360"/>
    </source>
</evidence>
<evidence type="ECO:0000269" key="4">
    <source>
    </source>
</evidence>
<evidence type="ECO:0000269" key="5">
    <source>
    </source>
</evidence>
<evidence type="ECO:0000303" key="6">
    <source>
    </source>
</evidence>
<evidence type="ECO:0000305" key="7"/>
<evidence type="ECO:0000312" key="8">
    <source>
        <dbReference type="EMBL" id="AAG08222.1"/>
    </source>
</evidence>
<gene>
    <name evidence="1" type="primary">cntO</name>
    <name evidence="6" type="synonym">zrmA</name>
    <name evidence="8" type="ordered locus">PA4837</name>
</gene>
<keyword id="KW-0998">Cell outer membrane</keyword>
<keyword id="KW-0406">Ion transport</keyword>
<keyword id="KW-0472">Membrane</keyword>
<keyword id="KW-0533">Nickel</keyword>
<keyword id="KW-0921">Nickel transport</keyword>
<keyword id="KW-0675">Receptor</keyword>
<keyword id="KW-1185">Reference proteome</keyword>
<keyword id="KW-0732">Signal</keyword>
<keyword id="KW-0798">TonB box</keyword>
<keyword id="KW-0812">Transmembrane</keyword>
<keyword id="KW-1134">Transmembrane beta strand</keyword>
<keyword id="KW-0813">Transport</keyword>
<keyword id="KW-0862">Zinc</keyword>
<keyword id="KW-0864">Zinc transport</keyword>
<name>CNTO_PSEAE</name>
<accession>Q9HUX3</accession>
<dbReference type="EMBL" id="AE004091">
    <property type="protein sequence ID" value="AAG08222.1"/>
    <property type="molecule type" value="Genomic_DNA"/>
</dbReference>
<dbReference type="PIR" id="A83043">
    <property type="entry name" value="A83043"/>
</dbReference>
<dbReference type="RefSeq" id="NP_253524.1">
    <property type="nucleotide sequence ID" value="NC_002516.2"/>
</dbReference>
<dbReference type="RefSeq" id="WP_010895685.1">
    <property type="nucleotide sequence ID" value="NZ_QZGE01000002.1"/>
</dbReference>
<dbReference type="SMR" id="Q9HUX3"/>
<dbReference type="STRING" id="208964.PA4837"/>
<dbReference type="PaxDb" id="208964-PA4837"/>
<dbReference type="GeneID" id="878137"/>
<dbReference type="KEGG" id="pae:PA4837"/>
<dbReference type="PATRIC" id="fig|208964.12.peg.5068"/>
<dbReference type="PseudoCAP" id="PA4837"/>
<dbReference type="HOGENOM" id="CLU_008287_9_4_6"/>
<dbReference type="InParanoid" id="Q9HUX3"/>
<dbReference type="OrthoDB" id="127311at2"/>
<dbReference type="PhylomeDB" id="Q9HUX3"/>
<dbReference type="BioCyc" id="PAER208964:G1FZ6-4951-MONOMER"/>
<dbReference type="Proteomes" id="UP000002438">
    <property type="component" value="Chromosome"/>
</dbReference>
<dbReference type="GO" id="GO:0009279">
    <property type="term" value="C:cell outer membrane"/>
    <property type="evidence" value="ECO:0000318"/>
    <property type="project" value="GO_Central"/>
</dbReference>
<dbReference type="GO" id="GO:0015344">
    <property type="term" value="F:siderophore uptake transmembrane transporter activity"/>
    <property type="evidence" value="ECO:0000318"/>
    <property type="project" value="GO_Central"/>
</dbReference>
<dbReference type="GO" id="GO:0038023">
    <property type="term" value="F:signaling receptor activity"/>
    <property type="evidence" value="ECO:0007669"/>
    <property type="project" value="InterPro"/>
</dbReference>
<dbReference type="GO" id="GO:0015675">
    <property type="term" value="P:nickel cation transport"/>
    <property type="evidence" value="ECO:0007669"/>
    <property type="project" value="UniProtKB-KW"/>
</dbReference>
<dbReference type="GO" id="GO:0033214">
    <property type="term" value="P:siderophore-dependent iron import into cell"/>
    <property type="evidence" value="ECO:0000318"/>
    <property type="project" value="GO_Central"/>
</dbReference>
<dbReference type="GO" id="GO:0006829">
    <property type="term" value="P:zinc ion transport"/>
    <property type="evidence" value="ECO:0007669"/>
    <property type="project" value="UniProtKB-KW"/>
</dbReference>
<dbReference type="CDD" id="cd01347">
    <property type="entry name" value="ligand_gated_channel"/>
    <property type="match status" value="1"/>
</dbReference>
<dbReference type="FunFam" id="2.170.130.10:FF:000001">
    <property type="entry name" value="Catecholate siderophore TonB-dependent receptor"/>
    <property type="match status" value="1"/>
</dbReference>
<dbReference type="FunFam" id="2.40.170.20:FF:000005">
    <property type="entry name" value="TonB-dependent siderophore receptor"/>
    <property type="match status" value="1"/>
</dbReference>
<dbReference type="Gene3D" id="2.40.170.20">
    <property type="entry name" value="TonB-dependent receptor, beta-barrel domain"/>
    <property type="match status" value="1"/>
</dbReference>
<dbReference type="Gene3D" id="2.170.130.10">
    <property type="entry name" value="TonB-dependent receptor, plug domain"/>
    <property type="match status" value="1"/>
</dbReference>
<dbReference type="InterPro" id="IPR012910">
    <property type="entry name" value="Plug_dom"/>
</dbReference>
<dbReference type="InterPro" id="IPR037066">
    <property type="entry name" value="Plug_dom_sf"/>
</dbReference>
<dbReference type="InterPro" id="IPR039426">
    <property type="entry name" value="TonB-dep_rcpt-like"/>
</dbReference>
<dbReference type="InterPro" id="IPR000531">
    <property type="entry name" value="TonB-dep_rcpt_b-brl"/>
</dbReference>
<dbReference type="InterPro" id="IPR036942">
    <property type="entry name" value="TonB_rcpt_b-brl_sf"/>
</dbReference>
<dbReference type="InterPro" id="IPR010105">
    <property type="entry name" value="TonB_sidphr_rcpt"/>
</dbReference>
<dbReference type="NCBIfam" id="TIGR01783">
    <property type="entry name" value="TonB-siderophor"/>
    <property type="match status" value="1"/>
</dbReference>
<dbReference type="PANTHER" id="PTHR32552">
    <property type="entry name" value="FERRICHROME IRON RECEPTOR-RELATED"/>
    <property type="match status" value="1"/>
</dbReference>
<dbReference type="PANTHER" id="PTHR32552:SF90">
    <property type="entry name" value="METAL-PSEUDOPALINE RECEPTOR CNTO"/>
    <property type="match status" value="1"/>
</dbReference>
<dbReference type="Pfam" id="PF07715">
    <property type="entry name" value="Plug"/>
    <property type="match status" value="1"/>
</dbReference>
<dbReference type="Pfam" id="PF00593">
    <property type="entry name" value="TonB_dep_Rec_b-barrel"/>
    <property type="match status" value="1"/>
</dbReference>
<dbReference type="SUPFAM" id="SSF56935">
    <property type="entry name" value="Porins"/>
    <property type="match status" value="1"/>
</dbReference>
<dbReference type="PROSITE" id="PS52016">
    <property type="entry name" value="TONB_DEPENDENT_REC_3"/>
    <property type="match status" value="1"/>
</dbReference>
<sequence length="708" mass="79064">MRVSVSLVLGVGLGCSSPALWAETESPAELEVLTVTAEAERAEGPVQGYRANRTASATRTDTRIEDIPQAISVVPRQVLDDLDSARIERALDFAGGVSRQNNFGGLTMFEYNVRGFTTSEFYRDGFSANRGYMNAPDSATIERVEILKGPASSLYGRGDPGGTVNLVTKKPQAERFARLHASAGSWDRYRSTLDLNTPLDEEGDLLYRMNLAVEDSKGFRDYADGQRLLVAPSISWQLDPDTSLLVEAEVVRNRQVFDRGTVAPHNHLGSLPRSRFFGEPDDGKIDNNNETLQATLRHHFNEQWSLRLASHYKHGHLDGYASENSSLAADGYSLRREYRYRDFEWHDSITQLDLLGDLHTGSIRHQLLMGLEYERYHNDELILRSIPSRNPYAIDIRRPVYGQPKPPFGRDDRNHEEVDAMALNLQDQIEFSEKWRGLLGVRFDRYRQDMNATRLNNGRFRETSSQQTQRAATPRIGVLYQATPEVGLFANASKSFKPNGGTDMAGKAFDPEEGRGYEAGVKLDLLDGRLGMTLAAFHLKKKNVLTADPSNPGYQQTAGEARSQGFDLQFSGQLTEQLRLIGAYAYIDAEVTKDENIARGSRLLNVPKHSGSLMGVYEFREGWLHGADAGAAVNYVGERAGDSSDSGFELPAYTTVDLLARYPLASNATLGVNVNNLFDRRYYERSYNNVWVAPGEPRNLTMSLTLNY</sequence>
<organism>
    <name type="scientific">Pseudomonas aeruginosa (strain ATCC 15692 / DSM 22644 / CIP 104116 / JCM 14847 / LMG 12228 / 1C / PRS 101 / PAO1)</name>
    <dbReference type="NCBI Taxonomy" id="208964"/>
    <lineage>
        <taxon>Bacteria</taxon>
        <taxon>Pseudomonadati</taxon>
        <taxon>Pseudomonadota</taxon>
        <taxon>Gammaproteobacteria</taxon>
        <taxon>Pseudomonadales</taxon>
        <taxon>Pseudomonadaceae</taxon>
        <taxon>Pseudomonas</taxon>
    </lineage>
</organism>
<feature type="signal peptide" evidence="2">
    <location>
        <begin position="1"/>
        <end position="21"/>
    </location>
</feature>
<feature type="chain" id="PRO_5004331124" description="Metal-pseudopaline receptor CntO" evidence="2">
    <location>
        <begin position="22"/>
        <end position="708"/>
    </location>
</feature>
<feature type="domain" description="TBDR plug" evidence="3">
    <location>
        <begin position="63"/>
        <end position="169"/>
    </location>
</feature>
<feature type="domain" description="TBDR beta-barrel" evidence="3">
    <location>
        <begin position="174"/>
        <end position="708"/>
    </location>
</feature>